<reference key="1">
    <citation type="journal article" date="1998" name="DNA Res.">
        <title>Structural analysis of Arabidopsis thaliana chromosome 5. IV. Sequence features of the regions of 1,456,315 bp covered by nineteen physically assigned P1 and TAC clones.</title>
        <authorList>
            <person name="Sato S."/>
            <person name="Kaneko T."/>
            <person name="Kotani H."/>
            <person name="Nakamura Y."/>
            <person name="Asamizu E."/>
            <person name="Miyajima N."/>
            <person name="Tabata S."/>
        </authorList>
    </citation>
    <scope>NUCLEOTIDE SEQUENCE [LARGE SCALE GENOMIC DNA]</scope>
    <source>
        <strain>cv. Columbia</strain>
    </source>
</reference>
<reference key="2">
    <citation type="journal article" date="2017" name="Plant J.">
        <title>Araport11: a complete reannotation of the Arabidopsis thaliana reference genome.</title>
        <authorList>
            <person name="Cheng C.Y."/>
            <person name="Krishnakumar V."/>
            <person name="Chan A.P."/>
            <person name="Thibaud-Nissen F."/>
            <person name="Schobel S."/>
            <person name="Town C.D."/>
        </authorList>
    </citation>
    <scope>GENOME REANNOTATION</scope>
    <source>
        <strain>cv. Columbia</strain>
    </source>
</reference>
<reference key="3">
    <citation type="submission" date="2004-11" db="EMBL/GenBank/DDBJ databases">
        <title>Arabidopsis ORF clones.</title>
        <authorList>
            <person name="Shinn P."/>
            <person name="Chen H."/>
            <person name="Cheuk R."/>
            <person name="Kim C.J."/>
            <person name="Ecker J.R."/>
        </authorList>
    </citation>
    <scope>NUCLEOTIDE SEQUENCE [LARGE SCALE MRNA]</scope>
</reference>
<reference key="4">
    <citation type="journal article" date="2003" name="Plant J.">
        <title>An Arabidopsis thaliana gene for methylsalicylate biosynthesis, identified by a biochemical genomics approach, has a role in defense.</title>
        <authorList>
            <person name="Chen F."/>
            <person name="D'Auria J.C."/>
            <person name="Tholl D."/>
            <person name="Ross J.R."/>
            <person name="Gershenzon J."/>
            <person name="Noel J.P."/>
            <person name="Pichersky E."/>
        </authorList>
    </citation>
    <scope>INDUCTION</scope>
</reference>
<reference key="5">
    <citation type="journal article" date="2007" name="Plant Cell">
        <title>Methylation of gibberellins by Arabidopsis GAMT1 and GAMT2.</title>
        <authorList>
            <person name="Varbanova M."/>
            <person name="Yamaguchi S."/>
            <person name="Yang Y."/>
            <person name="McKelvey K."/>
            <person name="Hanada A."/>
            <person name="Borochov R."/>
            <person name="Yu F."/>
            <person name="Jikumaru Y."/>
            <person name="Ross J."/>
            <person name="Cortes D."/>
            <person name="Ma C.J."/>
            <person name="Noel J.P."/>
            <person name="Mander L."/>
            <person name="Shulaev V."/>
            <person name="Kamiya Y."/>
            <person name="Rodermel S."/>
            <person name="Weiss D."/>
            <person name="Pichersky E."/>
        </authorList>
    </citation>
    <scope>FUNCTION</scope>
    <scope>CATALYTIC ACTIVITY</scope>
    <scope>BIOPHYSICOCHEMICAL PROPERTIES</scope>
    <scope>ACTIVITY REGULATION</scope>
    <scope>TISSUE SPECIFICITY</scope>
    <scope>DEVELOPMENTAL STAGE</scope>
    <scope>DISRUPTION PHENOTYPE</scope>
    <source>
        <strain>cv. Columbia</strain>
    </source>
</reference>
<name>GAMT2_ARATH</name>
<dbReference type="EC" id="2.1.1.276"/>
<dbReference type="EMBL" id="AB009049">
    <property type="protein sequence ID" value="BAB11257.1"/>
    <property type="status" value="ALT_INIT"/>
    <property type="molecule type" value="Genomic_DNA"/>
</dbReference>
<dbReference type="EMBL" id="CP002688">
    <property type="protein sequence ID" value="AED96746.1"/>
    <property type="molecule type" value="Genomic_DNA"/>
</dbReference>
<dbReference type="EMBL" id="BT015738">
    <property type="protein sequence ID" value="AAU84675.1"/>
    <property type="molecule type" value="mRNA"/>
</dbReference>
<dbReference type="EMBL" id="BT020177">
    <property type="protein sequence ID" value="AAV43779.1"/>
    <property type="molecule type" value="mRNA"/>
</dbReference>
<dbReference type="RefSeq" id="NP_200441.2">
    <property type="nucleotide sequence ID" value="NM_125013.3"/>
</dbReference>
<dbReference type="SMR" id="Q5XF78"/>
<dbReference type="STRING" id="3702.Q5XF78"/>
<dbReference type="PaxDb" id="3702-AT5G56300.1"/>
<dbReference type="ProteomicsDB" id="248557"/>
<dbReference type="DNASU" id="835729"/>
<dbReference type="EnsemblPlants" id="AT5G56300.1">
    <property type="protein sequence ID" value="AT5G56300.1"/>
    <property type="gene ID" value="AT5G56300"/>
</dbReference>
<dbReference type="GeneID" id="835729"/>
<dbReference type="Gramene" id="AT5G56300.1">
    <property type="protein sequence ID" value="AT5G56300.1"/>
    <property type="gene ID" value="AT5G56300"/>
</dbReference>
<dbReference type="KEGG" id="ath:AT5G56300"/>
<dbReference type="Araport" id="AT5G56300"/>
<dbReference type="TAIR" id="AT5G56300">
    <property type="gene designation" value="GAMT2"/>
</dbReference>
<dbReference type="eggNOG" id="ENOG502QQYU">
    <property type="taxonomic scope" value="Eukaryota"/>
</dbReference>
<dbReference type="HOGENOM" id="CLU_019628_1_1_1"/>
<dbReference type="InParanoid" id="Q5XF78"/>
<dbReference type="OMA" id="YLGPDLC"/>
<dbReference type="PhylomeDB" id="Q5XF78"/>
<dbReference type="BioCyc" id="MetaCyc:AT5G56300-MONOMER"/>
<dbReference type="BRENDA" id="2.1.1.276">
    <property type="organism ID" value="399"/>
</dbReference>
<dbReference type="PRO" id="PR:Q5XF78"/>
<dbReference type="Proteomes" id="UP000006548">
    <property type="component" value="Chromosome 5"/>
</dbReference>
<dbReference type="ExpressionAtlas" id="Q5XF78">
    <property type="expression patterns" value="baseline and differential"/>
</dbReference>
<dbReference type="GO" id="GO:0102118">
    <property type="term" value="F:gibberellin A4 carboxyl methyltransferase activity"/>
    <property type="evidence" value="ECO:0007669"/>
    <property type="project" value="UniProtKB-EC"/>
</dbReference>
<dbReference type="GO" id="GO:0010341">
    <property type="term" value="F:gibberellin carboxyl-O-methyltransferase activity"/>
    <property type="evidence" value="ECO:0000314"/>
    <property type="project" value="TAIR"/>
</dbReference>
<dbReference type="GO" id="GO:0046872">
    <property type="term" value="F:metal ion binding"/>
    <property type="evidence" value="ECO:0007669"/>
    <property type="project" value="UniProtKB-KW"/>
</dbReference>
<dbReference type="GO" id="GO:0008757">
    <property type="term" value="F:S-adenosylmethionine-dependent methyltransferase activity"/>
    <property type="evidence" value="ECO:0000314"/>
    <property type="project" value="TAIR"/>
</dbReference>
<dbReference type="GO" id="GO:0032259">
    <property type="term" value="P:methylation"/>
    <property type="evidence" value="ECO:0007669"/>
    <property type="project" value="UniProtKB-KW"/>
</dbReference>
<dbReference type="Gene3D" id="1.10.1200.270">
    <property type="entry name" value="Methyltransferase, alpha-helical capping domain"/>
    <property type="match status" value="1"/>
</dbReference>
<dbReference type="Gene3D" id="3.40.50.150">
    <property type="entry name" value="Vaccinia Virus protein VP39"/>
    <property type="match status" value="1"/>
</dbReference>
<dbReference type="InterPro" id="IPR005299">
    <property type="entry name" value="MeTrfase_7"/>
</dbReference>
<dbReference type="InterPro" id="IPR042086">
    <property type="entry name" value="MeTrfase_capping"/>
</dbReference>
<dbReference type="InterPro" id="IPR029063">
    <property type="entry name" value="SAM-dependent_MTases_sf"/>
</dbReference>
<dbReference type="PANTHER" id="PTHR31009">
    <property type="entry name" value="S-ADENOSYL-L-METHIONINE:CARBOXYL METHYLTRANSFERASE FAMILY PROTEIN"/>
    <property type="match status" value="1"/>
</dbReference>
<dbReference type="Pfam" id="PF03492">
    <property type="entry name" value="Methyltransf_7"/>
    <property type="match status" value="1"/>
</dbReference>
<dbReference type="SUPFAM" id="SSF53335">
    <property type="entry name" value="S-adenosyl-L-methionine-dependent methyltransferases"/>
    <property type="match status" value="1"/>
</dbReference>
<keyword id="KW-0460">Magnesium</keyword>
<keyword id="KW-0479">Metal-binding</keyword>
<keyword id="KW-0489">Methyltransferase</keyword>
<keyword id="KW-1185">Reference proteome</keyword>
<keyword id="KW-0949">S-adenosyl-L-methionine</keyword>
<keyword id="KW-0808">Transferase</keyword>
<gene>
    <name type="primary">GAMT2</name>
    <name type="ordered locus">At5g56300</name>
    <name type="ORF">MCD7.2</name>
</gene>
<evidence type="ECO:0000250" key="1"/>
<evidence type="ECO:0000250" key="2">
    <source>
        <dbReference type="UniProtKB" id="A0A6C0WW36"/>
    </source>
</evidence>
<evidence type="ECO:0000250" key="3">
    <source>
        <dbReference type="UniProtKB" id="B2KPR3"/>
    </source>
</evidence>
<evidence type="ECO:0000250" key="4">
    <source>
        <dbReference type="UniProtKB" id="Q9FLN8"/>
    </source>
</evidence>
<evidence type="ECO:0000269" key="5">
    <source>
    </source>
</evidence>
<evidence type="ECO:0000269" key="6">
    <source>
    </source>
</evidence>
<evidence type="ECO:0000305" key="7"/>
<evidence type="ECO:0000305" key="8">
    <source>
    </source>
</evidence>
<feature type="chain" id="PRO_0000422311" description="Gibberellic acid methyltransferase 2">
    <location>
        <begin position="1"/>
        <end position="387"/>
    </location>
</feature>
<feature type="binding site" evidence="3">
    <location>
        <position position="33"/>
    </location>
    <ligand>
        <name>S-adenosyl-L-homocysteine</name>
        <dbReference type="ChEBI" id="CHEBI:57856"/>
    </ligand>
</feature>
<feature type="binding site" evidence="3">
    <location>
        <position position="40"/>
    </location>
    <ligand>
        <name>gibberellin A4</name>
        <dbReference type="ChEBI" id="CHEBI:73251"/>
    </ligand>
</feature>
<feature type="binding site" evidence="3">
    <location>
        <position position="74"/>
    </location>
    <ligand>
        <name>S-adenosyl-L-homocysteine</name>
        <dbReference type="ChEBI" id="CHEBI:57856"/>
    </ligand>
</feature>
<feature type="binding site" evidence="3">
    <location>
        <position position="79"/>
    </location>
    <ligand>
        <name>S-adenosyl-L-homocysteine</name>
        <dbReference type="ChEBI" id="CHEBI:57856"/>
    </ligand>
</feature>
<feature type="binding site" evidence="3">
    <location>
        <position position="113"/>
    </location>
    <ligand>
        <name>S-adenosyl-L-homocysteine</name>
        <dbReference type="ChEBI" id="CHEBI:57856"/>
    </ligand>
</feature>
<feature type="binding site" evidence="2">
    <location>
        <position position="114"/>
    </location>
    <ligand>
        <name>S-adenosyl-L-homocysteine</name>
        <dbReference type="ChEBI" id="CHEBI:57856"/>
    </ligand>
</feature>
<feature type="binding site" evidence="3">
    <location>
        <position position="146"/>
    </location>
    <ligand>
        <name>S-adenosyl-L-homocysteine</name>
        <dbReference type="ChEBI" id="CHEBI:57856"/>
    </ligand>
</feature>
<feature type="binding site" evidence="3">
    <location>
        <position position="147"/>
    </location>
    <ligand>
        <name>S-adenosyl-L-homocysteine</name>
        <dbReference type="ChEBI" id="CHEBI:57856"/>
    </ligand>
</feature>
<feature type="binding site" evidence="3">
    <location>
        <position position="167"/>
    </location>
    <ligand>
        <name>gibberellin A4</name>
        <dbReference type="ChEBI" id="CHEBI:73251"/>
    </ligand>
</feature>
<feature type="binding site" evidence="3">
    <location>
        <position position="168"/>
    </location>
    <ligand>
        <name>gibberellin A4</name>
        <dbReference type="ChEBI" id="CHEBI:73251"/>
    </ligand>
</feature>
<feature type="binding site" evidence="4">
    <location>
        <position position="185"/>
    </location>
    <ligand>
        <name>Mg(2+)</name>
        <dbReference type="ChEBI" id="CHEBI:18420"/>
    </ligand>
</feature>
<feature type="binding site" evidence="1">
    <location>
        <position position="275"/>
    </location>
    <ligand>
        <name>Mg(2+)</name>
        <dbReference type="ChEBI" id="CHEBI:18420"/>
    </ligand>
</feature>
<feature type="binding site" evidence="4">
    <location>
        <position position="276"/>
    </location>
    <ligand>
        <name>Mg(2+)</name>
        <dbReference type="ChEBI" id="CHEBI:18420"/>
    </ligand>
</feature>
<feature type="binding site" evidence="4">
    <location>
        <position position="278"/>
    </location>
    <ligand>
        <name>Mg(2+)</name>
        <dbReference type="ChEBI" id="CHEBI:18420"/>
    </ligand>
</feature>
<feature type="binding site" evidence="4">
    <location>
        <position position="279"/>
    </location>
    <ligand>
        <name>Mg(2+)</name>
        <dbReference type="ChEBI" id="CHEBI:18420"/>
    </ligand>
</feature>
<proteinExistence type="evidence at protein level"/>
<sequence length="387" mass="43349">MESPSLPMTAKDWTTTSLHRVFAMQGGEDDLSYVNNSDSQALAITLSKPILISSLQSIKLFSDQTPIKITDLGCATGSNTFTTVDTVVETLQRRYTARCGGGGSPEFEAFFCDLPSNDFNMLFKLLAEKQKVDSPAKYFAGGVAGSFYDRLFPRGTIHVAVSLSALHWLSQIPEKVLEKESRTWNKGKTWIEGAKKEVVEAYAEQSDKDLDDFMSCRKEEMVKGGVLFVLMAGRPSGSSSQFGDQDTRAKHPFTTTMEQAWQDLIEEGLIDEETRDGFNIPAYMRSPEEVTAGIDRCGGFKIGKMDFLKIVEYSDEKQEEWKKDPVSYGRARTNLVQAAIRPMVDAYLGPDLSHELFKRYENRVSTNQEFLHITCFYGVVVFSAIRV</sequence>
<comment type="function">
    <text evidence="6">Methylates the carboxyl group of several gibberellins (GAs). Substrate preference is GA4 &gt; GA34 &gt; GA9 &gt; GA3 &gt; GA1 &gt; GA51 &gt; GA20. No activity with diterpenes abietic acid and ent-kaurenoic acid.</text>
</comment>
<comment type="catalytic activity">
    <reaction evidence="6">
        <text>gibberellin A4 + S-adenosyl-L-methionine = O-methyl gibberellin A4 + S-adenosyl-L-homocysteine</text>
        <dbReference type="Rhea" id="RHEA:36107"/>
        <dbReference type="ChEBI" id="CHEBI:57856"/>
        <dbReference type="ChEBI" id="CHEBI:59789"/>
        <dbReference type="ChEBI" id="CHEBI:73251"/>
        <dbReference type="ChEBI" id="CHEBI:73252"/>
        <dbReference type="EC" id="2.1.1.276"/>
    </reaction>
</comment>
<comment type="cofactor">
    <cofactor evidence="1">
        <name>Mg(2+)</name>
        <dbReference type="ChEBI" id="CHEBI:18420"/>
    </cofactor>
    <text evidence="1">Binds 1 Mg(2+) ion per subunit.</text>
</comment>
<comment type="activity regulation">
    <text evidence="6">Down-regulated by Zn(2+), Cu(2+) and Fe(3+). No effect of K(+), NH(4+), Na(+), Ca(2+), Mg(2+), Mn(2+) and Fe(2+).</text>
</comment>
<comment type="biophysicochemical properties">
    <kinetics>
        <KM evidence="6">5.9 uM for GA4</KM>
        <KM evidence="6">1.9 uM for GA9</KM>
        <text>kcat is 0.0015 sec(-1) for GA4. kcat is 0.0018 sec(-1) for GA9.</text>
    </kinetics>
    <phDependence>
        <text evidence="6">Optimum pH is 8.0.</text>
    </phDependence>
</comment>
<comment type="tissue specificity">
    <text evidence="6">Expressed in siliques and germinating seeds. Not detected in leaves, stems, flowers and roots.</text>
</comment>
<comment type="developmental stage">
    <text evidence="6">Expression begins at early stages of silique development, peaks in the second half of this process and decreases after the start of desiccation.</text>
</comment>
<comment type="induction">
    <text evidence="5">Up-regulated by alamethicin, but not by herbivory.</text>
</comment>
<comment type="disruption phenotype">
    <text evidence="6">No visible phenotype, even in gamt1 and gamt2 double mutants.</text>
</comment>
<comment type="miscellaneous">
    <text evidence="8">Overexpression of GAMT2 results in dwarf phenotype.</text>
</comment>
<comment type="similarity">
    <text evidence="7">Belongs to the methyltransferase superfamily. Type-7 methyltransferase family. SABATH subfamily.</text>
</comment>
<comment type="sequence caution" evidence="7">
    <conflict type="erroneous initiation">
        <sequence resource="EMBL-CDS" id="BAB11257"/>
    </conflict>
    <text>Truncated N-terminus.</text>
</comment>
<protein>
    <recommendedName>
        <fullName>Gibberellic acid methyltransferase 2</fullName>
    </recommendedName>
    <alternativeName>
        <fullName>Gibberellin A(4) carboxyl methyltransferase</fullName>
        <ecNumber>2.1.1.276</ecNumber>
    </alternativeName>
</protein>
<accession>Q5XF78</accession>
<accession>Q9FMA2</accession>
<organism>
    <name type="scientific">Arabidopsis thaliana</name>
    <name type="common">Mouse-ear cress</name>
    <dbReference type="NCBI Taxonomy" id="3702"/>
    <lineage>
        <taxon>Eukaryota</taxon>
        <taxon>Viridiplantae</taxon>
        <taxon>Streptophyta</taxon>
        <taxon>Embryophyta</taxon>
        <taxon>Tracheophyta</taxon>
        <taxon>Spermatophyta</taxon>
        <taxon>Magnoliopsida</taxon>
        <taxon>eudicotyledons</taxon>
        <taxon>Gunneridae</taxon>
        <taxon>Pentapetalae</taxon>
        <taxon>rosids</taxon>
        <taxon>malvids</taxon>
        <taxon>Brassicales</taxon>
        <taxon>Brassicaceae</taxon>
        <taxon>Camelineae</taxon>
        <taxon>Arabidopsis</taxon>
    </lineage>
</organism>